<reference key="1">
    <citation type="journal article" date="1996" name="Microbiology">
        <title>The dnaB-pheA (256 degrees-240 degrees) region of the Bacillus subtilis chromosome containing genes responsible for stress responses, the utilization of plant cell walls and primary metabolism.</title>
        <authorList>
            <person name="Wipat A."/>
            <person name="Carter N."/>
            <person name="Brignell C.S."/>
            <person name="Guy J.B."/>
            <person name="Piper K."/>
            <person name="Sanders J."/>
            <person name="Emmerson P.T."/>
            <person name="Harwood C.R."/>
        </authorList>
    </citation>
    <scope>NUCLEOTIDE SEQUENCE [GENOMIC DNA]</scope>
    <source>
        <strain>168</strain>
    </source>
</reference>
<reference key="2">
    <citation type="journal article" date="1997" name="Nature">
        <title>The complete genome sequence of the Gram-positive bacterium Bacillus subtilis.</title>
        <authorList>
            <person name="Kunst F."/>
            <person name="Ogasawara N."/>
            <person name="Moszer I."/>
            <person name="Albertini A.M."/>
            <person name="Alloni G."/>
            <person name="Azevedo V."/>
            <person name="Bertero M.G."/>
            <person name="Bessieres P."/>
            <person name="Bolotin A."/>
            <person name="Borchert S."/>
            <person name="Borriss R."/>
            <person name="Boursier L."/>
            <person name="Brans A."/>
            <person name="Braun M."/>
            <person name="Brignell S.C."/>
            <person name="Bron S."/>
            <person name="Brouillet S."/>
            <person name="Bruschi C.V."/>
            <person name="Caldwell B."/>
            <person name="Capuano V."/>
            <person name="Carter N.M."/>
            <person name="Choi S.-K."/>
            <person name="Codani J.-J."/>
            <person name="Connerton I.F."/>
            <person name="Cummings N.J."/>
            <person name="Daniel R.A."/>
            <person name="Denizot F."/>
            <person name="Devine K.M."/>
            <person name="Duesterhoeft A."/>
            <person name="Ehrlich S.D."/>
            <person name="Emmerson P.T."/>
            <person name="Entian K.-D."/>
            <person name="Errington J."/>
            <person name="Fabret C."/>
            <person name="Ferrari E."/>
            <person name="Foulger D."/>
            <person name="Fritz C."/>
            <person name="Fujita M."/>
            <person name="Fujita Y."/>
            <person name="Fuma S."/>
            <person name="Galizzi A."/>
            <person name="Galleron N."/>
            <person name="Ghim S.-Y."/>
            <person name="Glaser P."/>
            <person name="Goffeau A."/>
            <person name="Golightly E.J."/>
            <person name="Grandi G."/>
            <person name="Guiseppi G."/>
            <person name="Guy B.J."/>
            <person name="Haga K."/>
            <person name="Haiech J."/>
            <person name="Harwood C.R."/>
            <person name="Henaut A."/>
            <person name="Hilbert H."/>
            <person name="Holsappel S."/>
            <person name="Hosono S."/>
            <person name="Hullo M.-F."/>
            <person name="Itaya M."/>
            <person name="Jones L.-M."/>
            <person name="Joris B."/>
            <person name="Karamata D."/>
            <person name="Kasahara Y."/>
            <person name="Klaerr-Blanchard M."/>
            <person name="Klein C."/>
            <person name="Kobayashi Y."/>
            <person name="Koetter P."/>
            <person name="Koningstein G."/>
            <person name="Krogh S."/>
            <person name="Kumano M."/>
            <person name="Kurita K."/>
            <person name="Lapidus A."/>
            <person name="Lardinois S."/>
            <person name="Lauber J."/>
            <person name="Lazarevic V."/>
            <person name="Lee S.-M."/>
            <person name="Levine A."/>
            <person name="Liu H."/>
            <person name="Masuda S."/>
            <person name="Mauel C."/>
            <person name="Medigue C."/>
            <person name="Medina N."/>
            <person name="Mellado R.P."/>
            <person name="Mizuno M."/>
            <person name="Moestl D."/>
            <person name="Nakai S."/>
            <person name="Noback M."/>
            <person name="Noone D."/>
            <person name="O'Reilly M."/>
            <person name="Ogawa K."/>
            <person name="Ogiwara A."/>
            <person name="Oudega B."/>
            <person name="Park S.-H."/>
            <person name="Parro V."/>
            <person name="Pohl T.M."/>
            <person name="Portetelle D."/>
            <person name="Porwollik S."/>
            <person name="Prescott A.M."/>
            <person name="Presecan E."/>
            <person name="Pujic P."/>
            <person name="Purnelle B."/>
            <person name="Rapoport G."/>
            <person name="Rey M."/>
            <person name="Reynolds S."/>
            <person name="Rieger M."/>
            <person name="Rivolta C."/>
            <person name="Rocha E."/>
            <person name="Roche B."/>
            <person name="Rose M."/>
            <person name="Sadaie Y."/>
            <person name="Sato T."/>
            <person name="Scanlan E."/>
            <person name="Schleich S."/>
            <person name="Schroeter R."/>
            <person name="Scoffone F."/>
            <person name="Sekiguchi J."/>
            <person name="Sekowska A."/>
            <person name="Seror S.J."/>
            <person name="Serror P."/>
            <person name="Shin B.-S."/>
            <person name="Soldo B."/>
            <person name="Sorokin A."/>
            <person name="Tacconi E."/>
            <person name="Takagi T."/>
            <person name="Takahashi H."/>
            <person name="Takemaru K."/>
            <person name="Takeuchi M."/>
            <person name="Tamakoshi A."/>
            <person name="Tanaka T."/>
            <person name="Terpstra P."/>
            <person name="Tognoni A."/>
            <person name="Tosato V."/>
            <person name="Uchiyama S."/>
            <person name="Vandenbol M."/>
            <person name="Vannier F."/>
            <person name="Vassarotti A."/>
            <person name="Viari A."/>
            <person name="Wambutt R."/>
            <person name="Wedler E."/>
            <person name="Wedler H."/>
            <person name="Weitzenegger T."/>
            <person name="Winters P."/>
            <person name="Wipat A."/>
            <person name="Yamamoto H."/>
            <person name="Yamane K."/>
            <person name="Yasumoto K."/>
            <person name="Yata K."/>
            <person name="Yoshida K."/>
            <person name="Yoshikawa H.-F."/>
            <person name="Zumstein E."/>
            <person name="Yoshikawa H."/>
            <person name="Danchin A."/>
        </authorList>
    </citation>
    <scope>NUCLEOTIDE SEQUENCE [LARGE SCALE GENOMIC DNA]</scope>
    <source>
        <strain>168</strain>
    </source>
</reference>
<gene>
    <name evidence="1" type="primary">lrgB</name>
    <name type="synonym">ysbB</name>
    <name type="ordered locus">BSU28900</name>
</gene>
<comment type="function">
    <text evidence="1">Inhibits the expression or activity of extracellular murein hydrolases by interacting, possibly with LrgA, with the holin-like protein CidA. The LrgAB and CidA proteins may affect the proton motive force of the membrane. May be involved in programmed cell death (PCD), possibly triggering PCD in response to antibiotics and environmental stresses.</text>
</comment>
<comment type="subcellular location">
    <subcellularLocation>
        <location evidence="1">Cell membrane</location>
        <topology evidence="1">Multi-pass membrane protein</topology>
    </subcellularLocation>
</comment>
<comment type="similarity">
    <text evidence="1">Belongs to the CidB/LrgB family. LrgB subfamily.</text>
</comment>
<keyword id="KW-1003">Cell membrane</keyword>
<keyword id="KW-0204">Cytolysis</keyword>
<keyword id="KW-0472">Membrane</keyword>
<keyword id="KW-1185">Reference proteome</keyword>
<keyword id="KW-0812">Transmembrane</keyword>
<keyword id="KW-1133">Transmembrane helix</keyword>
<organism>
    <name type="scientific">Bacillus subtilis (strain 168)</name>
    <dbReference type="NCBI Taxonomy" id="224308"/>
    <lineage>
        <taxon>Bacteria</taxon>
        <taxon>Bacillati</taxon>
        <taxon>Bacillota</taxon>
        <taxon>Bacilli</taxon>
        <taxon>Bacillales</taxon>
        <taxon>Bacillaceae</taxon>
        <taxon>Bacillus</taxon>
    </lineage>
</organism>
<feature type="chain" id="PRO_0000217055" description="Antiholin-like protein LrgB">
    <location>
        <begin position="1"/>
        <end position="231"/>
    </location>
</feature>
<feature type="transmembrane region" description="Helical" evidence="1">
    <location>
        <begin position="7"/>
        <end position="24"/>
    </location>
</feature>
<feature type="transmembrane region" description="Helical" evidence="1">
    <location>
        <begin position="34"/>
        <end position="56"/>
    </location>
</feature>
<feature type="transmembrane region" description="Helical" evidence="1">
    <location>
        <begin position="91"/>
        <end position="113"/>
    </location>
</feature>
<feature type="transmembrane region" description="Helical" evidence="1">
    <location>
        <begin position="149"/>
        <end position="171"/>
    </location>
</feature>
<feature type="transmembrane region" description="Helical" evidence="1">
    <location>
        <begin position="207"/>
        <end position="229"/>
    </location>
</feature>
<protein>
    <recommendedName>
        <fullName evidence="1">Antiholin-like protein LrgB</fullName>
    </recommendedName>
</protein>
<proteinExistence type="inferred from homology"/>
<evidence type="ECO:0000255" key="1">
    <source>
        <dbReference type="HAMAP-Rule" id="MF_01142"/>
    </source>
</evidence>
<accession>P94516</accession>
<name>LRGB_BACSU</name>
<dbReference type="EMBL" id="Z75208">
    <property type="protein sequence ID" value="CAA99613.1"/>
    <property type="molecule type" value="Genomic_DNA"/>
</dbReference>
<dbReference type="EMBL" id="AL009126">
    <property type="protein sequence ID" value="CAB14850.1"/>
    <property type="molecule type" value="Genomic_DNA"/>
</dbReference>
<dbReference type="PIR" id="D69983">
    <property type="entry name" value="D69983"/>
</dbReference>
<dbReference type="RefSeq" id="WP_003229482.1">
    <property type="nucleotide sequence ID" value="NZ_OZ025638.1"/>
</dbReference>
<dbReference type="FunCoup" id="P94516">
    <property type="interactions" value="140"/>
</dbReference>
<dbReference type="STRING" id="224308.BSU28900"/>
<dbReference type="TCDB" id="2.A.122.1.6">
    <property type="family name" value="the lrgb/cidb holin-like glycolate/glycerate transporter (lrgb/cidb/ggt) family"/>
</dbReference>
<dbReference type="PaxDb" id="224308-BSU28900"/>
<dbReference type="EnsemblBacteria" id="CAB14850">
    <property type="protein sequence ID" value="CAB14850"/>
    <property type="gene ID" value="BSU_28900"/>
</dbReference>
<dbReference type="GeneID" id="86872593"/>
<dbReference type="GeneID" id="937418"/>
<dbReference type="KEGG" id="bsu:BSU28900"/>
<dbReference type="PATRIC" id="fig|224308.179.peg.3138"/>
<dbReference type="eggNOG" id="COG1346">
    <property type="taxonomic scope" value="Bacteria"/>
</dbReference>
<dbReference type="InParanoid" id="P94516"/>
<dbReference type="OrthoDB" id="9811701at2"/>
<dbReference type="PhylomeDB" id="P94516"/>
<dbReference type="BioCyc" id="BSUB:BSU28900-MONOMER"/>
<dbReference type="Proteomes" id="UP000001570">
    <property type="component" value="Chromosome"/>
</dbReference>
<dbReference type="GO" id="GO:0005886">
    <property type="term" value="C:plasma membrane"/>
    <property type="evidence" value="ECO:0007669"/>
    <property type="project" value="UniProtKB-SubCell"/>
</dbReference>
<dbReference type="GO" id="GO:0019835">
    <property type="term" value="P:cytolysis"/>
    <property type="evidence" value="ECO:0007669"/>
    <property type="project" value="UniProtKB-UniRule"/>
</dbReference>
<dbReference type="GO" id="GO:0031640">
    <property type="term" value="P:killing of cells of another organism"/>
    <property type="evidence" value="ECO:0007669"/>
    <property type="project" value="UniProtKB-KW"/>
</dbReference>
<dbReference type="GO" id="GO:0012501">
    <property type="term" value="P:programmed cell death"/>
    <property type="evidence" value="ECO:0007669"/>
    <property type="project" value="UniProtKB-UniRule"/>
</dbReference>
<dbReference type="HAMAP" id="MF_01142">
    <property type="entry name" value="LrgB"/>
    <property type="match status" value="1"/>
</dbReference>
<dbReference type="InterPro" id="IPR024891">
    <property type="entry name" value="Antiholin-like_LrgB"/>
</dbReference>
<dbReference type="InterPro" id="IPR007300">
    <property type="entry name" value="CidB/LrgB"/>
</dbReference>
<dbReference type="NCBIfam" id="NF003291">
    <property type="entry name" value="PRK04288.1"/>
    <property type="match status" value="1"/>
</dbReference>
<dbReference type="PANTHER" id="PTHR30249:SF0">
    <property type="entry name" value="PLASTIDAL GLYCOLATE_GLYCERATE TRANSLOCATOR 1, CHLOROPLASTIC"/>
    <property type="match status" value="1"/>
</dbReference>
<dbReference type="PANTHER" id="PTHR30249">
    <property type="entry name" value="PUTATIVE SEROTONIN TRANSPORTER"/>
    <property type="match status" value="1"/>
</dbReference>
<dbReference type="Pfam" id="PF04172">
    <property type="entry name" value="LrgB"/>
    <property type="match status" value="1"/>
</dbReference>
<sequence>MESTMSPYFGIVVSLAAFGIGTFLFKKTKGFFLFTPLFVAMVLGIAFLKIGGFSYADYNNGGEIIKFFLEPATIAFAIPLYKQRDKLKKYWWQIMASIIAGSICSVTIVYLLAKGIHLDSAVMKSMLPQAATTAIALPLSKGIGGISDITAFAVIFNAVIVYALGALFLKVFKVKNPISKGLALGTSGHALGVAVGIEMGEVEAAMASIAVVVVGVVTVLVIPVFVQLIGG</sequence>